<name>MIAA_VIBC1</name>
<dbReference type="EC" id="2.5.1.75" evidence="1"/>
<dbReference type="EMBL" id="CP000789">
    <property type="protein sequence ID" value="ABU69155.1"/>
    <property type="molecule type" value="Genomic_DNA"/>
</dbReference>
<dbReference type="RefSeq" id="WP_005438326.1">
    <property type="nucleotide sequence ID" value="NC_022269.1"/>
</dbReference>
<dbReference type="SMR" id="A7MX77"/>
<dbReference type="GeneID" id="67375992"/>
<dbReference type="KEGG" id="vha:VIBHAR_00095"/>
<dbReference type="PATRIC" id="fig|338187.25.peg.2426"/>
<dbReference type="Proteomes" id="UP000008152">
    <property type="component" value="Chromosome I"/>
</dbReference>
<dbReference type="GO" id="GO:0005524">
    <property type="term" value="F:ATP binding"/>
    <property type="evidence" value="ECO:0007669"/>
    <property type="project" value="UniProtKB-UniRule"/>
</dbReference>
<dbReference type="GO" id="GO:0052381">
    <property type="term" value="F:tRNA dimethylallyltransferase activity"/>
    <property type="evidence" value="ECO:0007669"/>
    <property type="project" value="UniProtKB-UniRule"/>
</dbReference>
<dbReference type="GO" id="GO:0006400">
    <property type="term" value="P:tRNA modification"/>
    <property type="evidence" value="ECO:0007669"/>
    <property type="project" value="TreeGrafter"/>
</dbReference>
<dbReference type="FunFam" id="1.10.20.140:FF:000001">
    <property type="entry name" value="tRNA dimethylallyltransferase"/>
    <property type="match status" value="1"/>
</dbReference>
<dbReference type="Gene3D" id="1.10.20.140">
    <property type="match status" value="1"/>
</dbReference>
<dbReference type="Gene3D" id="3.40.50.300">
    <property type="entry name" value="P-loop containing nucleotide triphosphate hydrolases"/>
    <property type="match status" value="1"/>
</dbReference>
<dbReference type="HAMAP" id="MF_00185">
    <property type="entry name" value="IPP_trans"/>
    <property type="match status" value="1"/>
</dbReference>
<dbReference type="InterPro" id="IPR039657">
    <property type="entry name" value="Dimethylallyltransferase"/>
</dbReference>
<dbReference type="InterPro" id="IPR018022">
    <property type="entry name" value="IPT"/>
</dbReference>
<dbReference type="InterPro" id="IPR027417">
    <property type="entry name" value="P-loop_NTPase"/>
</dbReference>
<dbReference type="NCBIfam" id="TIGR00174">
    <property type="entry name" value="miaA"/>
    <property type="match status" value="1"/>
</dbReference>
<dbReference type="PANTHER" id="PTHR11088">
    <property type="entry name" value="TRNA DIMETHYLALLYLTRANSFERASE"/>
    <property type="match status" value="1"/>
</dbReference>
<dbReference type="PANTHER" id="PTHR11088:SF60">
    <property type="entry name" value="TRNA DIMETHYLALLYLTRANSFERASE"/>
    <property type="match status" value="1"/>
</dbReference>
<dbReference type="Pfam" id="PF01715">
    <property type="entry name" value="IPPT"/>
    <property type="match status" value="1"/>
</dbReference>
<dbReference type="SUPFAM" id="SSF52540">
    <property type="entry name" value="P-loop containing nucleoside triphosphate hydrolases"/>
    <property type="match status" value="1"/>
</dbReference>
<proteinExistence type="inferred from homology"/>
<evidence type="ECO:0000255" key="1">
    <source>
        <dbReference type="HAMAP-Rule" id="MF_00185"/>
    </source>
</evidence>
<keyword id="KW-0067">ATP-binding</keyword>
<keyword id="KW-0460">Magnesium</keyword>
<keyword id="KW-0547">Nucleotide-binding</keyword>
<keyword id="KW-0808">Transferase</keyword>
<keyword id="KW-0819">tRNA processing</keyword>
<reference key="1">
    <citation type="submission" date="2007-08" db="EMBL/GenBank/DDBJ databases">
        <authorList>
            <consortium name="The Vibrio harveyi Genome Sequencing Project"/>
            <person name="Bassler B."/>
            <person name="Clifton S.W."/>
            <person name="Fulton L."/>
            <person name="Delehaunty K."/>
            <person name="Fronick C."/>
            <person name="Harrison M."/>
            <person name="Markivic C."/>
            <person name="Fulton R."/>
            <person name="Tin-Wollam A.-M."/>
            <person name="Shah N."/>
            <person name="Pepin K."/>
            <person name="Nash W."/>
            <person name="Thiruvilangam P."/>
            <person name="Bhonagiri V."/>
            <person name="Waters C."/>
            <person name="Tu K.C."/>
            <person name="Irgon J."/>
            <person name="Wilson R.K."/>
        </authorList>
    </citation>
    <scope>NUCLEOTIDE SEQUENCE [LARGE SCALE GENOMIC DNA]</scope>
    <source>
        <strain>ATCC BAA-1116 / BB120</strain>
    </source>
</reference>
<sequence>MTDKLPLALFLMGPTASGKTELAIRLRQRYPVEIISVDSALIYKDMNIGTAKPDERELSLAPHRLIDILDPSESYSAADFRRDALQAMDDIVAEGKIPLLVGGTMLYYKALLEGLSPLPAANPEIRQQIEQEALTKGWSVLHDELKEIDPVSAARIHPNDPQRLSRALEVFRISGKTLTELTQTKGDSLPYRVKQFAIAPKDRAELHRRIELRFDKMMEAGFEEEMKALYARKDLHPDLPSIRCVGYRQMWEYLDGDCTRDEAVFRGICATRQLAKRQITWLRSWNDLTWLDSDNIEQALETMSEAIASD</sequence>
<gene>
    <name evidence="1" type="primary">miaA</name>
    <name type="ordered locus">VIBHAR_00095</name>
</gene>
<feature type="chain" id="PRO_1000020683" description="tRNA dimethylallyltransferase">
    <location>
        <begin position="1"/>
        <end position="310"/>
    </location>
</feature>
<feature type="region of interest" description="Interaction with substrate tRNA" evidence="1">
    <location>
        <begin position="38"/>
        <end position="41"/>
    </location>
</feature>
<feature type="region of interest" description="Interaction with substrate tRNA" evidence="1">
    <location>
        <begin position="162"/>
        <end position="166"/>
    </location>
</feature>
<feature type="region of interest" description="Interaction with substrate tRNA" evidence="1">
    <location>
        <begin position="243"/>
        <end position="248"/>
    </location>
</feature>
<feature type="region of interest" description="Interaction with substrate tRNA" evidence="1">
    <location>
        <begin position="276"/>
        <end position="283"/>
    </location>
</feature>
<feature type="binding site" evidence="1">
    <location>
        <begin position="13"/>
        <end position="20"/>
    </location>
    <ligand>
        <name>ATP</name>
        <dbReference type="ChEBI" id="CHEBI:30616"/>
    </ligand>
</feature>
<feature type="binding site" evidence="1">
    <location>
        <begin position="15"/>
        <end position="20"/>
    </location>
    <ligand>
        <name>substrate</name>
    </ligand>
</feature>
<feature type="site" description="Interaction with substrate tRNA" evidence="1">
    <location>
        <position position="104"/>
    </location>
</feature>
<feature type="site" description="Interaction with substrate tRNA" evidence="1">
    <location>
        <position position="126"/>
    </location>
</feature>
<organism>
    <name type="scientific">Vibrio campbellii (strain ATCC BAA-1116)</name>
    <dbReference type="NCBI Taxonomy" id="2902295"/>
    <lineage>
        <taxon>Bacteria</taxon>
        <taxon>Pseudomonadati</taxon>
        <taxon>Pseudomonadota</taxon>
        <taxon>Gammaproteobacteria</taxon>
        <taxon>Vibrionales</taxon>
        <taxon>Vibrionaceae</taxon>
        <taxon>Vibrio</taxon>
    </lineage>
</organism>
<comment type="function">
    <text evidence="1">Catalyzes the transfer of a dimethylallyl group onto the adenine at position 37 in tRNAs that read codons beginning with uridine, leading to the formation of N6-(dimethylallyl)adenosine (i(6)A).</text>
</comment>
<comment type="catalytic activity">
    <reaction evidence="1">
        <text>adenosine(37) in tRNA + dimethylallyl diphosphate = N(6)-dimethylallyladenosine(37) in tRNA + diphosphate</text>
        <dbReference type="Rhea" id="RHEA:26482"/>
        <dbReference type="Rhea" id="RHEA-COMP:10162"/>
        <dbReference type="Rhea" id="RHEA-COMP:10375"/>
        <dbReference type="ChEBI" id="CHEBI:33019"/>
        <dbReference type="ChEBI" id="CHEBI:57623"/>
        <dbReference type="ChEBI" id="CHEBI:74411"/>
        <dbReference type="ChEBI" id="CHEBI:74415"/>
        <dbReference type="EC" id="2.5.1.75"/>
    </reaction>
</comment>
<comment type="cofactor">
    <cofactor evidence="1">
        <name>Mg(2+)</name>
        <dbReference type="ChEBI" id="CHEBI:18420"/>
    </cofactor>
</comment>
<comment type="subunit">
    <text evidence="1">Monomer.</text>
</comment>
<comment type="similarity">
    <text evidence="1">Belongs to the IPP transferase family.</text>
</comment>
<accession>A7MX77</accession>
<protein>
    <recommendedName>
        <fullName evidence="1">tRNA dimethylallyltransferase</fullName>
        <ecNumber evidence="1">2.5.1.75</ecNumber>
    </recommendedName>
    <alternativeName>
        <fullName evidence="1">Dimethylallyl diphosphate:tRNA dimethylallyltransferase</fullName>
        <shortName evidence="1">DMAPP:tRNA dimethylallyltransferase</shortName>
        <shortName evidence="1">DMATase</shortName>
    </alternativeName>
    <alternativeName>
        <fullName evidence="1">Isopentenyl-diphosphate:tRNA isopentenyltransferase</fullName>
        <shortName evidence="1">IPP transferase</shortName>
        <shortName evidence="1">IPPT</shortName>
        <shortName evidence="1">IPTase</shortName>
    </alternativeName>
</protein>